<gene>
    <name type="primary">Ccr1l1</name>
    <name type="synonym">Cmkbr1l1</name>
</gene>
<sequence length="356" mass="40849">MEIPAVTEPSYNTVAKNDFMSGFLCFSINVRAFGITVLTPLYSLVFIIGVIGHVLVVLVLIQHKRLRNMTSIYLFNLAISDLVFLSTLPFWVDYIMKGDWIFGNAMCKFVSGFYYLGLYSDMFFITLLTIDRYLAVVHVVFALRARTVTFGIISSIITWVLAALVSIPCLYVFKSQMEFTYHTCRAILPRKSLIRFLRFQALTMNILGLILPLLAMIICYTRIINVLHRRPNKKKAKVMRLIFVITLLFFLLLAPYYLAAFVSAFEDVLFTPSCLRSQQVDLSLMITEALAYTHCCVNPVIYVFVGKRFRKYLWQLFRRHTAITLPQWLPFLSVDRAQRASATPPSTVEIETSADL</sequence>
<evidence type="ECO:0000255" key="1"/>
<evidence type="ECO:0000255" key="2">
    <source>
        <dbReference type="PROSITE-ProRule" id="PRU00521"/>
    </source>
</evidence>
<evidence type="ECO:0000305" key="3"/>
<protein>
    <recommendedName>
        <fullName>C-C chemokine receptor 1-like protein 1</fullName>
    </recommendedName>
    <alternativeName>
        <fullName>Macrophage inflammatory protein 1 alpha receptor-like 1</fullName>
    </alternativeName>
</protein>
<proteinExistence type="evidence at transcript level"/>
<comment type="function">
    <text>Probable receptor for a C-C type chemokine.</text>
</comment>
<comment type="subcellular location">
    <subcellularLocation>
        <location>Cell membrane</location>
        <topology>Multi-pass membrane protein</topology>
    </subcellularLocation>
</comment>
<comment type="tissue specificity">
    <text>Detected in the spleen, liver and leukocytes.</text>
</comment>
<comment type="similarity">
    <text evidence="2">Belongs to the G-protein coupled receptor 1 family.</text>
</comment>
<keyword id="KW-1003">Cell membrane</keyword>
<keyword id="KW-1015">Disulfide bond</keyword>
<keyword id="KW-0297">G-protein coupled receptor</keyword>
<keyword id="KW-0472">Membrane</keyword>
<keyword id="KW-0675">Receptor</keyword>
<keyword id="KW-1185">Reference proteome</keyword>
<keyword id="KW-0807">Transducer</keyword>
<keyword id="KW-0812">Transmembrane</keyword>
<keyword id="KW-1133">Transmembrane helix</keyword>
<reference key="1">
    <citation type="journal article" date="1995" name="J. Biol. Chem.">
        <title>Cloning and differential tissue-specific expression of three mouse beta chemokine receptor-like genes, including the gene for a functional macrophage inflammatory protein-1 alpha receptor.</title>
        <authorList>
            <person name="Gao J.-L."/>
            <person name="Murphy P.M."/>
        </authorList>
    </citation>
    <scope>NUCLEOTIDE SEQUENCE [GENOMIC DNA]</scope>
    <source>
        <strain>129/SvJ</strain>
    </source>
</reference>
<reference key="2">
    <citation type="submission" date="2005-09" db="EMBL/GenBank/DDBJ databases">
        <authorList>
            <person name="Mural R.J."/>
            <person name="Adams M.D."/>
            <person name="Myers E.W."/>
            <person name="Smith H.O."/>
            <person name="Venter J.C."/>
        </authorList>
    </citation>
    <scope>NUCLEOTIDE SEQUENCE [LARGE SCALE GENOMIC DNA]</scope>
</reference>
<reference key="3">
    <citation type="journal article" date="2004" name="Genome Res.">
        <title>The status, quality, and expansion of the NIH full-length cDNA project: the Mammalian Gene Collection (MGC).</title>
        <authorList>
            <consortium name="The MGC Project Team"/>
        </authorList>
    </citation>
    <scope>NUCLEOTIDE SEQUENCE [LARGE SCALE MRNA]</scope>
</reference>
<accession>P51676</accession>
<accession>A0JP35</accession>
<feature type="chain" id="PRO_0000069298" description="C-C chemokine receptor 1-like protein 1">
    <location>
        <begin position="1"/>
        <end position="356"/>
    </location>
</feature>
<feature type="topological domain" description="Extracellular" evidence="1">
    <location>
        <begin position="1"/>
        <end position="32"/>
    </location>
</feature>
<feature type="transmembrane region" description="Helical; Name=1" evidence="1">
    <location>
        <begin position="33"/>
        <end position="60"/>
    </location>
</feature>
<feature type="topological domain" description="Cytoplasmic" evidence="1">
    <location>
        <begin position="61"/>
        <end position="67"/>
    </location>
</feature>
<feature type="transmembrane region" description="Helical; Name=2" evidence="1">
    <location>
        <begin position="68"/>
        <end position="92"/>
    </location>
</feature>
<feature type="topological domain" description="Extracellular" evidence="1">
    <location>
        <begin position="93"/>
        <end position="108"/>
    </location>
</feature>
<feature type="transmembrane region" description="Helical; Name=3" evidence="1">
    <location>
        <begin position="109"/>
        <end position="130"/>
    </location>
</feature>
<feature type="topological domain" description="Cytoplasmic" evidence="1">
    <location>
        <begin position="131"/>
        <end position="147"/>
    </location>
</feature>
<feature type="transmembrane region" description="Helical; Name=4" evidence="1">
    <location>
        <begin position="148"/>
        <end position="172"/>
    </location>
</feature>
<feature type="topological domain" description="Extracellular" evidence="1">
    <location>
        <begin position="173"/>
        <end position="198"/>
    </location>
</feature>
<feature type="transmembrane region" description="Helical; Name=5" evidence="1">
    <location>
        <begin position="199"/>
        <end position="224"/>
    </location>
</feature>
<feature type="topological domain" description="Cytoplasmic" evidence="1">
    <location>
        <begin position="225"/>
        <end position="240"/>
    </location>
</feature>
<feature type="transmembrane region" description="Helical; Name=6" evidence="1">
    <location>
        <begin position="241"/>
        <end position="265"/>
    </location>
</feature>
<feature type="topological domain" description="Extracellular" evidence="1">
    <location>
        <begin position="266"/>
        <end position="282"/>
    </location>
</feature>
<feature type="transmembrane region" description="Helical; Name=7" evidence="1">
    <location>
        <begin position="283"/>
        <end position="306"/>
    </location>
</feature>
<feature type="topological domain" description="Cytoplasmic" evidence="1">
    <location>
        <begin position="307"/>
        <end position="356"/>
    </location>
</feature>
<feature type="disulfide bond" evidence="2">
    <location>
        <begin position="107"/>
        <end position="184"/>
    </location>
</feature>
<feature type="sequence conflict" description="In Ref. 1; AAA89154." evidence="3" ref="1">
    <original>L</original>
    <variation>P</variation>
    <location>
        <position position="38"/>
    </location>
</feature>
<feature type="sequence conflict" description="In Ref. 1; AAA89154." evidence="3" ref="1">
    <original>V</original>
    <variation>E</variation>
    <location>
        <position position="334"/>
    </location>
</feature>
<feature type="sequence conflict" description="In Ref. 1; AAA89154." evidence="3" ref="1">
    <original>TP</original>
    <variation>RL</variation>
    <location>
        <begin position="343"/>
        <end position="344"/>
    </location>
</feature>
<organism>
    <name type="scientific">Mus musculus</name>
    <name type="common">Mouse</name>
    <dbReference type="NCBI Taxonomy" id="10090"/>
    <lineage>
        <taxon>Eukaryota</taxon>
        <taxon>Metazoa</taxon>
        <taxon>Chordata</taxon>
        <taxon>Craniata</taxon>
        <taxon>Vertebrata</taxon>
        <taxon>Euteleostomi</taxon>
        <taxon>Mammalia</taxon>
        <taxon>Eutheria</taxon>
        <taxon>Euarchontoglires</taxon>
        <taxon>Glires</taxon>
        <taxon>Rodentia</taxon>
        <taxon>Myomorpha</taxon>
        <taxon>Muroidea</taxon>
        <taxon>Muridae</taxon>
        <taxon>Murinae</taxon>
        <taxon>Mus</taxon>
        <taxon>Mus</taxon>
    </lineage>
</organism>
<dbReference type="EMBL" id="U28405">
    <property type="protein sequence ID" value="AAA89154.1"/>
    <property type="molecule type" value="Genomic_DNA"/>
</dbReference>
<dbReference type="EMBL" id="CH466671">
    <property type="protein sequence ID" value="EDL37174.1"/>
    <property type="molecule type" value="Genomic_DNA"/>
</dbReference>
<dbReference type="EMBL" id="BC127143">
    <property type="protein sequence ID" value="AAI27144.1"/>
    <property type="molecule type" value="mRNA"/>
</dbReference>
<dbReference type="EMBL" id="BC128466">
    <property type="protein sequence ID" value="AAI28467.1"/>
    <property type="molecule type" value="mRNA"/>
</dbReference>
<dbReference type="CCDS" id="CCDS23667.1"/>
<dbReference type="PIR" id="I49340">
    <property type="entry name" value="I49340"/>
</dbReference>
<dbReference type="RefSeq" id="NP_031744.3">
    <property type="nucleotide sequence ID" value="NM_007718.4"/>
</dbReference>
<dbReference type="SMR" id="P51676"/>
<dbReference type="FunCoup" id="P51676">
    <property type="interactions" value="299"/>
</dbReference>
<dbReference type="STRING" id="10090.ENSMUSP00000071353"/>
<dbReference type="PaxDb" id="10090-ENSMUSP00000071353"/>
<dbReference type="DNASU" id="12770"/>
<dbReference type="Ensembl" id="ENSMUST00000071404.5">
    <property type="protein sequence ID" value="ENSMUSP00000071353.4"/>
    <property type="gene ID" value="ENSMUSG00000064039.5"/>
</dbReference>
<dbReference type="GeneID" id="12770"/>
<dbReference type="KEGG" id="mmu:12770"/>
<dbReference type="UCSC" id="uc009sgz.2">
    <property type="organism name" value="mouse"/>
</dbReference>
<dbReference type="AGR" id="MGI:104617"/>
<dbReference type="CTD" id="12770"/>
<dbReference type="MGI" id="MGI:104617">
    <property type="gene designation" value="Ccr1l1"/>
</dbReference>
<dbReference type="VEuPathDB" id="HostDB:ENSMUSG00000064039"/>
<dbReference type="eggNOG" id="KOG3656">
    <property type="taxonomic scope" value="Eukaryota"/>
</dbReference>
<dbReference type="GeneTree" id="ENSGT01020000230359"/>
<dbReference type="HOGENOM" id="CLU_009579_8_3_1"/>
<dbReference type="InParanoid" id="P51676"/>
<dbReference type="OMA" id="TEYACSI"/>
<dbReference type="OrthoDB" id="5970631at2759"/>
<dbReference type="PhylomeDB" id="P51676"/>
<dbReference type="TreeFam" id="TF330966"/>
<dbReference type="BioGRID-ORCS" id="12770">
    <property type="hits" value="0 hits in 78 CRISPR screens"/>
</dbReference>
<dbReference type="PRO" id="PR:P51676"/>
<dbReference type="Proteomes" id="UP000000589">
    <property type="component" value="Chromosome 9"/>
</dbReference>
<dbReference type="RNAct" id="P51676">
    <property type="molecule type" value="protein"/>
</dbReference>
<dbReference type="Bgee" id="ENSMUSG00000064039">
    <property type="expression patterns" value="Expressed in placenta labyrinth and 8 other cell types or tissues"/>
</dbReference>
<dbReference type="GO" id="GO:0005886">
    <property type="term" value="C:plasma membrane"/>
    <property type="evidence" value="ECO:0007669"/>
    <property type="project" value="UniProtKB-SubCell"/>
</dbReference>
<dbReference type="GO" id="GO:0016493">
    <property type="term" value="F:C-C chemokine receptor activity"/>
    <property type="evidence" value="ECO:0007669"/>
    <property type="project" value="InterPro"/>
</dbReference>
<dbReference type="GO" id="GO:0006935">
    <property type="term" value="P:chemotaxis"/>
    <property type="evidence" value="ECO:0007669"/>
    <property type="project" value="InterPro"/>
</dbReference>
<dbReference type="GO" id="GO:0006955">
    <property type="term" value="P:immune response"/>
    <property type="evidence" value="ECO:0007669"/>
    <property type="project" value="InterPro"/>
</dbReference>
<dbReference type="GO" id="GO:0006954">
    <property type="term" value="P:inflammatory response"/>
    <property type="evidence" value="ECO:0007669"/>
    <property type="project" value="InterPro"/>
</dbReference>
<dbReference type="GO" id="GO:0090026">
    <property type="term" value="P:positive regulation of monocyte chemotaxis"/>
    <property type="evidence" value="ECO:0007669"/>
    <property type="project" value="InterPro"/>
</dbReference>
<dbReference type="FunFam" id="1.20.1070.10:FF:001139">
    <property type="entry name" value="Chemokine (C-C motif) receptor 1-like 1"/>
    <property type="match status" value="1"/>
</dbReference>
<dbReference type="Gene3D" id="1.20.1070.10">
    <property type="entry name" value="Rhodopsin 7-helix transmembrane proteins"/>
    <property type="match status" value="1"/>
</dbReference>
<dbReference type="InterPro" id="IPR050119">
    <property type="entry name" value="CCR1-9-like"/>
</dbReference>
<dbReference type="InterPro" id="IPR002236">
    <property type="entry name" value="Chemokine_CCR1"/>
</dbReference>
<dbReference type="InterPro" id="IPR000355">
    <property type="entry name" value="Chemokine_rcpt"/>
</dbReference>
<dbReference type="InterPro" id="IPR000276">
    <property type="entry name" value="GPCR_Rhodpsn"/>
</dbReference>
<dbReference type="InterPro" id="IPR017452">
    <property type="entry name" value="GPCR_Rhodpsn_7TM"/>
</dbReference>
<dbReference type="PANTHER" id="PTHR10489:SF923">
    <property type="entry name" value="C-C CHEMOKINE RECEPTOR 1-LIKE PROTEIN 1"/>
    <property type="match status" value="1"/>
</dbReference>
<dbReference type="PANTHER" id="PTHR10489">
    <property type="entry name" value="CELL ADHESION MOLECULE"/>
    <property type="match status" value="1"/>
</dbReference>
<dbReference type="Pfam" id="PF00001">
    <property type="entry name" value="7tm_1"/>
    <property type="match status" value="1"/>
</dbReference>
<dbReference type="PRINTS" id="PR00657">
    <property type="entry name" value="CCCHEMOKINER"/>
</dbReference>
<dbReference type="PRINTS" id="PR01106">
    <property type="entry name" value="CHEMOKINER1"/>
</dbReference>
<dbReference type="PRINTS" id="PR00237">
    <property type="entry name" value="GPCRRHODOPSN"/>
</dbReference>
<dbReference type="SUPFAM" id="SSF81321">
    <property type="entry name" value="Family A G protein-coupled receptor-like"/>
    <property type="match status" value="1"/>
</dbReference>
<dbReference type="PROSITE" id="PS00237">
    <property type="entry name" value="G_PROTEIN_RECEP_F1_1"/>
    <property type="match status" value="1"/>
</dbReference>
<dbReference type="PROSITE" id="PS50262">
    <property type="entry name" value="G_PROTEIN_RECEP_F1_2"/>
    <property type="match status" value="1"/>
</dbReference>
<name>CC1L1_MOUSE</name>